<gene>
    <name evidence="2" type="primary">atpA</name>
</gene>
<feature type="chain" id="PRO_0000339069" description="ATP synthase subunit alpha, plastid">
    <location>
        <begin position="1"/>
        <end position="507"/>
    </location>
</feature>
<feature type="binding site" evidence="2">
    <location>
        <begin position="170"/>
        <end position="177"/>
    </location>
    <ligand>
        <name>ATP</name>
        <dbReference type="ChEBI" id="CHEBI:30616"/>
    </ligand>
</feature>
<feature type="site" description="Required for activity" evidence="2">
    <location>
        <position position="363"/>
    </location>
</feature>
<geneLocation type="non-photosynthetic plastid"/>
<comment type="function">
    <text evidence="2">Produces ATP from ADP in the presence of a proton gradient across the membrane. The alpha chain is a regulatory subunit.</text>
</comment>
<comment type="catalytic activity">
    <reaction evidence="2">
        <text>ATP + H2O + 4 H(+)(in) = ADP + phosphate + 5 H(+)(out)</text>
        <dbReference type="Rhea" id="RHEA:57720"/>
        <dbReference type="ChEBI" id="CHEBI:15377"/>
        <dbReference type="ChEBI" id="CHEBI:15378"/>
        <dbReference type="ChEBI" id="CHEBI:30616"/>
        <dbReference type="ChEBI" id="CHEBI:43474"/>
        <dbReference type="ChEBI" id="CHEBI:456216"/>
        <dbReference type="EC" id="7.1.2.2"/>
    </reaction>
</comment>
<comment type="subunit">
    <text evidence="2">F-type ATPases have 2 components, CF(1) - the catalytic core - and CF(0) - the membrane proton channel. CF(1) has five subunits: alpha(3), beta(3), gamma(1), delta(1), epsilon(1). CF(0) has four main subunits: a, b, b' and c.</text>
</comment>
<comment type="subcellular location">
    <subcellularLocation>
        <location evidence="1">Plastid membrane</location>
        <topology evidence="2">Peripheral membrane protein</topology>
    </subcellularLocation>
</comment>
<comment type="similarity">
    <text evidence="2">Belongs to the ATPase alpha/beta chains family.</text>
</comment>
<dbReference type="EC" id="7.1.2.2" evidence="2"/>
<dbReference type="EMBL" id="EU043314">
    <property type="protein sequence ID" value="ABS54472.1"/>
    <property type="molecule type" value="Genomic_DNA"/>
</dbReference>
<dbReference type="RefSeq" id="YP_001687211.1">
    <property type="nucleotide sequence ID" value="NC_010359.1"/>
</dbReference>
<dbReference type="SMR" id="B0YPM5"/>
<dbReference type="GeneID" id="5952151"/>
<dbReference type="GO" id="GO:0042170">
    <property type="term" value="C:plastid membrane"/>
    <property type="evidence" value="ECO:0007669"/>
    <property type="project" value="UniProtKB-SubCell"/>
</dbReference>
<dbReference type="GO" id="GO:0045259">
    <property type="term" value="C:proton-transporting ATP synthase complex"/>
    <property type="evidence" value="ECO:0007669"/>
    <property type="project" value="UniProtKB-KW"/>
</dbReference>
<dbReference type="GO" id="GO:0043531">
    <property type="term" value="F:ADP binding"/>
    <property type="evidence" value="ECO:0007669"/>
    <property type="project" value="TreeGrafter"/>
</dbReference>
<dbReference type="GO" id="GO:0005524">
    <property type="term" value="F:ATP binding"/>
    <property type="evidence" value="ECO:0007669"/>
    <property type="project" value="UniProtKB-KW"/>
</dbReference>
<dbReference type="GO" id="GO:0046933">
    <property type="term" value="F:proton-transporting ATP synthase activity, rotational mechanism"/>
    <property type="evidence" value="ECO:0007669"/>
    <property type="project" value="InterPro"/>
</dbReference>
<dbReference type="CDD" id="cd18113">
    <property type="entry name" value="ATP-synt_F1_alpha_C"/>
    <property type="match status" value="1"/>
</dbReference>
<dbReference type="CDD" id="cd18116">
    <property type="entry name" value="ATP-synt_F1_alpha_N"/>
    <property type="match status" value="1"/>
</dbReference>
<dbReference type="CDD" id="cd01132">
    <property type="entry name" value="F1-ATPase_alpha_CD"/>
    <property type="match status" value="1"/>
</dbReference>
<dbReference type="FunFam" id="1.20.150.20:FF:000001">
    <property type="entry name" value="ATP synthase subunit alpha"/>
    <property type="match status" value="1"/>
</dbReference>
<dbReference type="FunFam" id="2.40.30.20:FF:000001">
    <property type="entry name" value="ATP synthase subunit alpha"/>
    <property type="match status" value="1"/>
</dbReference>
<dbReference type="FunFam" id="3.40.50.300:FF:000002">
    <property type="entry name" value="ATP synthase subunit alpha"/>
    <property type="match status" value="1"/>
</dbReference>
<dbReference type="Gene3D" id="2.40.30.20">
    <property type="match status" value="1"/>
</dbReference>
<dbReference type="Gene3D" id="1.20.150.20">
    <property type="entry name" value="ATP synthase alpha/beta chain, C-terminal domain"/>
    <property type="match status" value="1"/>
</dbReference>
<dbReference type="Gene3D" id="3.40.50.300">
    <property type="entry name" value="P-loop containing nucleotide triphosphate hydrolases"/>
    <property type="match status" value="1"/>
</dbReference>
<dbReference type="HAMAP" id="MF_01346">
    <property type="entry name" value="ATP_synth_alpha_bact"/>
    <property type="match status" value="1"/>
</dbReference>
<dbReference type="InterPro" id="IPR023366">
    <property type="entry name" value="ATP_synth_asu-like_sf"/>
</dbReference>
<dbReference type="InterPro" id="IPR000793">
    <property type="entry name" value="ATP_synth_asu_C"/>
</dbReference>
<dbReference type="InterPro" id="IPR038376">
    <property type="entry name" value="ATP_synth_asu_C_sf"/>
</dbReference>
<dbReference type="InterPro" id="IPR033732">
    <property type="entry name" value="ATP_synth_F1_a_nt-bd_dom"/>
</dbReference>
<dbReference type="InterPro" id="IPR005294">
    <property type="entry name" value="ATP_synth_F1_asu"/>
</dbReference>
<dbReference type="InterPro" id="IPR020003">
    <property type="entry name" value="ATPase_a/bsu_AS"/>
</dbReference>
<dbReference type="InterPro" id="IPR004100">
    <property type="entry name" value="ATPase_F1/V1/A1_a/bsu_N"/>
</dbReference>
<dbReference type="InterPro" id="IPR036121">
    <property type="entry name" value="ATPase_F1/V1/A1_a/bsu_N_sf"/>
</dbReference>
<dbReference type="InterPro" id="IPR000194">
    <property type="entry name" value="ATPase_F1/V1/A1_a/bsu_nucl-bd"/>
</dbReference>
<dbReference type="InterPro" id="IPR027417">
    <property type="entry name" value="P-loop_NTPase"/>
</dbReference>
<dbReference type="NCBIfam" id="TIGR00962">
    <property type="entry name" value="atpA"/>
    <property type="match status" value="1"/>
</dbReference>
<dbReference type="NCBIfam" id="NF009884">
    <property type="entry name" value="PRK13343.1"/>
    <property type="match status" value="1"/>
</dbReference>
<dbReference type="PANTHER" id="PTHR48082">
    <property type="entry name" value="ATP SYNTHASE SUBUNIT ALPHA, MITOCHONDRIAL"/>
    <property type="match status" value="1"/>
</dbReference>
<dbReference type="PANTHER" id="PTHR48082:SF2">
    <property type="entry name" value="ATP SYNTHASE SUBUNIT ALPHA, MITOCHONDRIAL"/>
    <property type="match status" value="1"/>
</dbReference>
<dbReference type="Pfam" id="PF00006">
    <property type="entry name" value="ATP-synt_ab"/>
    <property type="match status" value="1"/>
</dbReference>
<dbReference type="Pfam" id="PF00306">
    <property type="entry name" value="ATP-synt_ab_C"/>
    <property type="match status" value="1"/>
</dbReference>
<dbReference type="Pfam" id="PF02874">
    <property type="entry name" value="ATP-synt_ab_N"/>
    <property type="match status" value="1"/>
</dbReference>
<dbReference type="PIRSF" id="PIRSF039088">
    <property type="entry name" value="F_ATPase_subunit_alpha"/>
    <property type="match status" value="1"/>
</dbReference>
<dbReference type="SUPFAM" id="SSF47917">
    <property type="entry name" value="C-terminal domain of alpha and beta subunits of F1 ATP synthase"/>
    <property type="match status" value="1"/>
</dbReference>
<dbReference type="SUPFAM" id="SSF50615">
    <property type="entry name" value="N-terminal domain of alpha and beta subunits of F1 ATP synthase"/>
    <property type="match status" value="1"/>
</dbReference>
<dbReference type="SUPFAM" id="SSF52540">
    <property type="entry name" value="P-loop containing nucleoside triphosphate hydrolases"/>
    <property type="match status" value="1"/>
</dbReference>
<dbReference type="PROSITE" id="PS00152">
    <property type="entry name" value="ATPASE_ALPHA_BETA"/>
    <property type="match status" value="1"/>
</dbReference>
<organism>
    <name type="scientific">Aneura mirabilis</name>
    <name type="common">Parasitic liverwort</name>
    <name type="synonym">Cryptothallus mirabilis</name>
    <dbReference type="NCBI Taxonomy" id="280810"/>
    <lineage>
        <taxon>Eukaryota</taxon>
        <taxon>Viridiplantae</taxon>
        <taxon>Streptophyta</taxon>
        <taxon>Embryophyta</taxon>
        <taxon>Marchantiophyta</taxon>
        <taxon>Jungermanniopsida</taxon>
        <taxon>Metzgeriidae</taxon>
        <taxon>Metzgeriales</taxon>
        <taxon>Aneuraceae</taxon>
        <taxon>Aneura</taxon>
    </lineage>
</organism>
<sequence>MVNIRPDEISNVIRTRIEQYNQEVKVVNTGTVPQVGDGIARIYGLDKVMAGELVKFEDGTVGIAPNSESDNVGVVLMGDGLTIQEGSSVKATGQIAQIPVSEAYLGRVVNALAQPIDGKGKIPASESRLIESPAPGIISRRSVYEPMQTGLIAIDSMIPIGRGQRELIIGDRQTGKTAVATDTILNQKGQDVICIYVAIGQKASSVAQVVNTFEERGALKYTIVVTENANSPATLQYLAPYTGAALAEYFMYRKQHTLIVYDDLSKQAQAYRQMSLLLRRPPGREAYPGDVFYLHSRLLERAAKSNSQLGEGSMTAPPIIETQAGDVSAYIPTNVISITDGQIFLSADLFNAGIRPAINVGISVSRVGSAAQIRAMKQVAGKLKLELAQFAELEAFAQFASDLDKATQNQLARGQRLRELLKQSQSAPLGVEEQVATIHTGVNGYSDILETGQVKKFLVQLREYLPTNKPQFAEIIRSTKIFTEEAENILKEAIREHSELFSSRESK</sequence>
<reference key="1">
    <citation type="journal article" date="2008" name="Mol. Biol. Evol.">
        <title>Functional gene losses occur with minimal size reduction in the plastid genome of the parasitic liverwort Aneura mirabilis.</title>
        <authorList>
            <person name="Wickett N.J."/>
            <person name="Zhang Y."/>
            <person name="Hansen S.K."/>
            <person name="Roper J.M."/>
            <person name="Kuehl J.V."/>
            <person name="Plock S.A."/>
            <person name="Wolf P.G."/>
            <person name="dePamphilis C.W."/>
            <person name="Boore J.L."/>
            <person name="Goffinet B."/>
        </authorList>
    </citation>
    <scope>NUCLEOTIDE SEQUENCE [LARGE SCALE GENOMIC DNA]</scope>
</reference>
<evidence type="ECO:0000250" key="1"/>
<evidence type="ECO:0000255" key="2">
    <source>
        <dbReference type="HAMAP-Rule" id="MF_01346"/>
    </source>
</evidence>
<keyword id="KW-0066">ATP synthesis</keyword>
<keyword id="KW-0067">ATP-binding</keyword>
<keyword id="KW-0139">CF(1)</keyword>
<keyword id="KW-0375">Hydrogen ion transport</keyword>
<keyword id="KW-0406">Ion transport</keyword>
<keyword id="KW-0472">Membrane</keyword>
<keyword id="KW-0547">Nucleotide-binding</keyword>
<keyword id="KW-0934">Plastid</keyword>
<keyword id="KW-1278">Translocase</keyword>
<keyword id="KW-0813">Transport</keyword>
<accession>B0YPM5</accession>
<proteinExistence type="inferred from homology"/>
<name>ATPA_ANEMR</name>
<protein>
    <recommendedName>
        <fullName evidence="2">ATP synthase subunit alpha, plastid</fullName>
        <ecNumber evidence="2">7.1.2.2</ecNumber>
    </recommendedName>
    <alternativeName>
        <fullName evidence="2">ATP synthase F1 sector subunit alpha</fullName>
    </alternativeName>
    <alternativeName>
        <fullName evidence="2">F-ATPase subunit alpha</fullName>
    </alternativeName>
</protein>